<keyword id="KW-0004">4Fe-4S</keyword>
<keyword id="KW-0148">Chlorophyll</keyword>
<keyword id="KW-0150">Chloroplast</keyword>
<keyword id="KW-0157">Chromophore</keyword>
<keyword id="KW-0249">Electron transport</keyword>
<keyword id="KW-0408">Iron</keyword>
<keyword id="KW-0411">Iron-sulfur</keyword>
<keyword id="KW-0460">Magnesium</keyword>
<keyword id="KW-0472">Membrane</keyword>
<keyword id="KW-0479">Metal-binding</keyword>
<keyword id="KW-0560">Oxidoreductase</keyword>
<keyword id="KW-0602">Photosynthesis</keyword>
<keyword id="KW-0603">Photosystem I</keyword>
<keyword id="KW-0934">Plastid</keyword>
<keyword id="KW-0793">Thylakoid</keyword>
<keyword id="KW-0812">Transmembrane</keyword>
<keyword id="KW-1133">Transmembrane helix</keyword>
<keyword id="KW-0813">Transport</keyword>
<protein>
    <recommendedName>
        <fullName evidence="1">Photosystem I P700 chlorophyll a apoprotein A2</fullName>
        <ecNumber evidence="1">1.97.1.12</ecNumber>
    </recommendedName>
    <alternativeName>
        <fullName evidence="1">PSI-B</fullName>
    </alternativeName>
    <alternativeName>
        <fullName evidence="1">PsaB</fullName>
    </alternativeName>
</protein>
<reference key="1">
    <citation type="journal article" date="2006" name="Mol. Biol. Evol.">
        <title>The chloroplast genome of Phalaenopsis aphrodite (Orchidaceae): comparative analysis of evolutionary rate with that of grasses and its phylogenetic implications.</title>
        <authorList>
            <person name="Chang C.-C."/>
            <person name="Lin H.-C."/>
            <person name="Lin I.-P."/>
            <person name="Chow T.-Y."/>
            <person name="Chen H.-H."/>
            <person name="Chen W.-H."/>
            <person name="Cheng C.-H."/>
            <person name="Lin C.-Y."/>
            <person name="Liu S.-M."/>
            <person name="Chang C.-C."/>
            <person name="Chaw S.-M."/>
        </authorList>
    </citation>
    <scope>NUCLEOTIDE SEQUENCE [LARGE SCALE GENOMIC DNA]</scope>
    <source>
        <strain>cv. Taisugar TS-97</strain>
    </source>
</reference>
<organism>
    <name type="scientific">Phalaenopsis aphrodite subsp. formosana</name>
    <name type="common">Moth orchid</name>
    <dbReference type="NCBI Taxonomy" id="308872"/>
    <lineage>
        <taxon>Eukaryota</taxon>
        <taxon>Viridiplantae</taxon>
        <taxon>Streptophyta</taxon>
        <taxon>Embryophyta</taxon>
        <taxon>Tracheophyta</taxon>
        <taxon>Spermatophyta</taxon>
        <taxon>Magnoliopsida</taxon>
        <taxon>Liliopsida</taxon>
        <taxon>Asparagales</taxon>
        <taxon>Orchidaceae</taxon>
        <taxon>Epidendroideae</taxon>
        <taxon>Vandeae</taxon>
        <taxon>Aeridinae</taxon>
        <taxon>Phalaenopsis</taxon>
    </lineage>
</organism>
<sequence>MTLRFPRFSQGLAQDPTTRRIWFGIATAHDFESHDDITEERLYQNIFASHFGQLAIIFLWTSGNLFHVAWQGNFESWIQDPLHVRPIAHAIWDPHFGQPAVEAFTRGGAIGPVNIAYSGVYQWWYTIGLRTNGDLYTGALFLLLLSAISLIASWLHLQPKWKPSVSWFKNAESRLNHHLSGLFGVSSLAWTGHLVHVAIPGSRGEYVRWNNFLEVLPYPQGLGPLFMGQWNLYAQNPDSSNHLFGTSQGAGTAILTLLGGFHPQTQSLWLTDIAHHHLAIAFLFLVAGHMYRTNFGIGHSIKDLLEAHIPPGGRLGRGHKGLYDTINNSLHFQLGLALASLGVITSLVAQHMYSLPAYAFIAQDFTTQAALYTHHQYIAGFIMTGAFAHGAIFFIRDYNPEQNEDNVLARMLDHKEAITSHLSWASLFLGFHTLGLYVHNDVMLAFGTPEKQILIEPIFAQWIQSAHGKTSYGFDVLLSSTNSPAFNAGRSIWLPGWLNAINENSNSLFLTIGPGDFLVHHAIALGLHTTTLILVKGALDARGSKLMPDKKDFGYSFPCDGPGRGGTCDISAWDAFYLAVFWMLNTIGWVTFYWHWKHITLWQGNVSQFNESSTYLMGWLRDYLWLNSSQLINGYNPFGMNSLSVWAWMFLFGHLVWATGFMFLISWRGYWQELIETLAWAHERTPLANLIRWKDKPVALSIVQARLVGLVHFSVGYIFTYAAFLIASTSGKFG</sequence>
<dbReference type="EC" id="1.97.1.12" evidence="1"/>
<dbReference type="EMBL" id="AY916449">
    <property type="protein sequence ID" value="AAW82502.1"/>
    <property type="molecule type" value="Genomic_DNA"/>
</dbReference>
<dbReference type="RefSeq" id="YP_358577.1">
    <property type="nucleotide sequence ID" value="NC_007499.1"/>
</dbReference>
<dbReference type="SMR" id="Q3BAP1"/>
<dbReference type="GeneID" id="3741675"/>
<dbReference type="GO" id="GO:0009535">
    <property type="term" value="C:chloroplast thylakoid membrane"/>
    <property type="evidence" value="ECO:0007669"/>
    <property type="project" value="UniProtKB-SubCell"/>
</dbReference>
<dbReference type="GO" id="GO:0009522">
    <property type="term" value="C:photosystem I"/>
    <property type="evidence" value="ECO:0007669"/>
    <property type="project" value="UniProtKB-KW"/>
</dbReference>
<dbReference type="GO" id="GO:0051539">
    <property type="term" value="F:4 iron, 4 sulfur cluster binding"/>
    <property type="evidence" value="ECO:0007669"/>
    <property type="project" value="UniProtKB-KW"/>
</dbReference>
<dbReference type="GO" id="GO:0016168">
    <property type="term" value="F:chlorophyll binding"/>
    <property type="evidence" value="ECO:0007669"/>
    <property type="project" value="UniProtKB-KW"/>
</dbReference>
<dbReference type="GO" id="GO:0009055">
    <property type="term" value="F:electron transfer activity"/>
    <property type="evidence" value="ECO:0007669"/>
    <property type="project" value="UniProtKB-UniRule"/>
</dbReference>
<dbReference type="GO" id="GO:0000287">
    <property type="term" value="F:magnesium ion binding"/>
    <property type="evidence" value="ECO:0007669"/>
    <property type="project" value="UniProtKB-UniRule"/>
</dbReference>
<dbReference type="GO" id="GO:0016491">
    <property type="term" value="F:oxidoreductase activity"/>
    <property type="evidence" value="ECO:0007669"/>
    <property type="project" value="UniProtKB-KW"/>
</dbReference>
<dbReference type="GO" id="GO:0015979">
    <property type="term" value="P:photosynthesis"/>
    <property type="evidence" value="ECO:0007669"/>
    <property type="project" value="UniProtKB-UniRule"/>
</dbReference>
<dbReference type="FunFam" id="1.20.1130.10:FF:000001">
    <property type="entry name" value="Photosystem I P700 chlorophyll a apoprotein A2"/>
    <property type="match status" value="1"/>
</dbReference>
<dbReference type="Gene3D" id="1.20.1130.10">
    <property type="entry name" value="Photosystem I PsaA/PsaB"/>
    <property type="match status" value="1"/>
</dbReference>
<dbReference type="HAMAP" id="MF_00482">
    <property type="entry name" value="PSI_PsaB"/>
    <property type="match status" value="1"/>
</dbReference>
<dbReference type="InterPro" id="IPR001280">
    <property type="entry name" value="PSI_PsaA/B"/>
</dbReference>
<dbReference type="InterPro" id="IPR020586">
    <property type="entry name" value="PSI_PsaA/B_CS"/>
</dbReference>
<dbReference type="InterPro" id="IPR036408">
    <property type="entry name" value="PSI_PsaA/B_sf"/>
</dbReference>
<dbReference type="InterPro" id="IPR006244">
    <property type="entry name" value="PSI_PsaB"/>
</dbReference>
<dbReference type="NCBIfam" id="TIGR01336">
    <property type="entry name" value="psaB"/>
    <property type="match status" value="1"/>
</dbReference>
<dbReference type="PANTHER" id="PTHR30128">
    <property type="entry name" value="OUTER MEMBRANE PROTEIN, OMPA-RELATED"/>
    <property type="match status" value="1"/>
</dbReference>
<dbReference type="PANTHER" id="PTHR30128:SF19">
    <property type="entry name" value="PHOTOSYSTEM I P700 CHLOROPHYLL A APOPROTEIN A1-RELATED"/>
    <property type="match status" value="1"/>
</dbReference>
<dbReference type="Pfam" id="PF00223">
    <property type="entry name" value="PsaA_PsaB"/>
    <property type="match status" value="1"/>
</dbReference>
<dbReference type="PIRSF" id="PIRSF002905">
    <property type="entry name" value="PSI_A"/>
    <property type="match status" value="1"/>
</dbReference>
<dbReference type="PRINTS" id="PR00257">
    <property type="entry name" value="PHOTSYSPSAAB"/>
</dbReference>
<dbReference type="SUPFAM" id="SSF81558">
    <property type="entry name" value="Photosystem I subunits PsaA/PsaB"/>
    <property type="match status" value="1"/>
</dbReference>
<dbReference type="PROSITE" id="PS00419">
    <property type="entry name" value="PHOTOSYSTEM_I_PSAAB"/>
    <property type="match status" value="1"/>
</dbReference>
<feature type="chain" id="PRO_0000277127" description="Photosystem I P700 chlorophyll a apoprotein A2">
    <location>
        <begin position="1"/>
        <end position="734"/>
    </location>
</feature>
<feature type="transmembrane region" description="Helical; Name=I" evidence="1">
    <location>
        <begin position="46"/>
        <end position="69"/>
    </location>
</feature>
<feature type="transmembrane region" description="Helical; Name=II" evidence="1">
    <location>
        <begin position="135"/>
        <end position="158"/>
    </location>
</feature>
<feature type="transmembrane region" description="Helical; Name=III" evidence="1">
    <location>
        <begin position="175"/>
        <end position="199"/>
    </location>
</feature>
<feature type="transmembrane region" description="Helical; Name=IV" evidence="1">
    <location>
        <begin position="273"/>
        <end position="291"/>
    </location>
</feature>
<feature type="transmembrane region" description="Helical; Name=V" evidence="1">
    <location>
        <begin position="330"/>
        <end position="353"/>
    </location>
</feature>
<feature type="transmembrane region" description="Helical; Name=VI" evidence="1">
    <location>
        <begin position="369"/>
        <end position="395"/>
    </location>
</feature>
<feature type="transmembrane region" description="Helical; Name=VII" evidence="1">
    <location>
        <begin position="417"/>
        <end position="439"/>
    </location>
</feature>
<feature type="transmembrane region" description="Helical; Name=VIII" evidence="1">
    <location>
        <begin position="517"/>
        <end position="535"/>
    </location>
</feature>
<feature type="transmembrane region" description="Helical; Name=IX" evidence="1">
    <location>
        <begin position="575"/>
        <end position="596"/>
    </location>
</feature>
<feature type="transmembrane region" description="Helical; Name=X" evidence="1">
    <location>
        <begin position="643"/>
        <end position="665"/>
    </location>
</feature>
<feature type="transmembrane region" description="Helical; Name=XI" evidence="1">
    <location>
        <begin position="707"/>
        <end position="727"/>
    </location>
</feature>
<feature type="binding site" evidence="1">
    <location>
        <position position="559"/>
    </location>
    <ligand>
        <name>[4Fe-4S] cluster</name>
        <dbReference type="ChEBI" id="CHEBI:49883"/>
        <note>ligand shared between dimeric partners</note>
    </ligand>
</feature>
<feature type="binding site" evidence="1">
    <location>
        <position position="568"/>
    </location>
    <ligand>
        <name>[4Fe-4S] cluster</name>
        <dbReference type="ChEBI" id="CHEBI:49883"/>
        <note>ligand shared between dimeric partners</note>
    </ligand>
</feature>
<feature type="binding site" description="axial binding residue" evidence="1">
    <location>
        <position position="654"/>
    </location>
    <ligand>
        <name>chlorophyll a</name>
        <dbReference type="ChEBI" id="CHEBI:58416"/>
        <label>B1</label>
    </ligand>
    <ligandPart>
        <name>Mg</name>
        <dbReference type="ChEBI" id="CHEBI:25107"/>
    </ligandPart>
</feature>
<feature type="binding site" description="axial binding residue" evidence="1">
    <location>
        <position position="662"/>
    </location>
    <ligand>
        <name>chlorophyll a</name>
        <dbReference type="ChEBI" id="CHEBI:58416"/>
        <label>B3</label>
    </ligand>
    <ligandPart>
        <name>Mg</name>
        <dbReference type="ChEBI" id="CHEBI:25107"/>
    </ligandPart>
</feature>
<feature type="binding site" evidence="1">
    <location>
        <position position="670"/>
    </location>
    <ligand>
        <name>chlorophyll a</name>
        <dbReference type="ChEBI" id="CHEBI:58416"/>
        <label>B3</label>
    </ligand>
</feature>
<feature type="binding site" evidence="1">
    <location>
        <position position="671"/>
    </location>
    <ligand>
        <name>phylloquinone</name>
        <dbReference type="ChEBI" id="CHEBI:18067"/>
        <label>B</label>
    </ligand>
</feature>
<evidence type="ECO:0000255" key="1">
    <source>
        <dbReference type="HAMAP-Rule" id="MF_00482"/>
    </source>
</evidence>
<name>PSAB_PHAAO</name>
<proteinExistence type="inferred from homology"/>
<geneLocation type="chloroplast"/>
<gene>
    <name evidence="1" type="primary">psaB</name>
</gene>
<comment type="function">
    <text evidence="1">PsaA and PsaB bind P700, the primary electron donor of photosystem I (PSI), as well as the electron acceptors A0, A1 and FX. PSI is a plastocyanin-ferredoxin oxidoreductase, converting photonic excitation into a charge separation, which transfers an electron from the donor P700 chlorophyll pair to the spectroscopically characterized acceptors A0, A1, FX, FA and FB in turn. Oxidized P700 is reduced on the lumenal side of the thylakoid membrane by plastocyanin.</text>
</comment>
<comment type="catalytic activity">
    <reaction evidence="1">
        <text>reduced [plastocyanin] + hnu + oxidized [2Fe-2S]-[ferredoxin] = oxidized [plastocyanin] + reduced [2Fe-2S]-[ferredoxin]</text>
        <dbReference type="Rhea" id="RHEA:30407"/>
        <dbReference type="Rhea" id="RHEA-COMP:10000"/>
        <dbReference type="Rhea" id="RHEA-COMP:10001"/>
        <dbReference type="Rhea" id="RHEA-COMP:10039"/>
        <dbReference type="Rhea" id="RHEA-COMP:10040"/>
        <dbReference type="ChEBI" id="CHEBI:29036"/>
        <dbReference type="ChEBI" id="CHEBI:30212"/>
        <dbReference type="ChEBI" id="CHEBI:33737"/>
        <dbReference type="ChEBI" id="CHEBI:33738"/>
        <dbReference type="ChEBI" id="CHEBI:49552"/>
        <dbReference type="EC" id="1.97.1.12"/>
    </reaction>
</comment>
<comment type="cofactor">
    <text evidence="1">P700 is a chlorophyll a/chlorophyll a' dimer, A0 is one or more chlorophyll a, A1 is one or both phylloquinones and FX is a shared 4Fe-4S iron-sulfur center.</text>
</comment>
<comment type="subunit">
    <text evidence="1">The PsaA/B heterodimer binds the P700 chlorophyll special pair and subsequent electron acceptors. PSI consists of a core antenna complex that captures photons, and an electron transfer chain that converts photonic excitation into a charge separation. The eukaryotic PSI reaction center is composed of at least 11 subunits.</text>
</comment>
<comment type="subcellular location">
    <subcellularLocation>
        <location>Plastid</location>
        <location>Chloroplast thylakoid membrane</location>
        <topology>Multi-pass membrane protein</topology>
    </subcellularLocation>
</comment>
<comment type="similarity">
    <text evidence="1">Belongs to the PsaA/PsaB family.</text>
</comment>
<accession>Q3BAP1</accession>